<accession>P0DOJ4</accession>
<accession>P03074</accession>
<accession>Q76TX5</accession>
<accession>Q76W02</accession>
<accession>Q89471</accession>
<dbReference type="EC" id="5.6.2.4" evidence="1"/>
<dbReference type="EMBL" id="AF442959">
    <property type="protein sequence ID" value="AAL35609.1"/>
    <property type="molecule type" value="Genomic_DNA"/>
</dbReference>
<dbReference type="RefSeq" id="YP_009111413.1">
    <molecule id="P0DOJ4-1"/>
    <property type="nucleotide sequence ID" value="NC_001515.2"/>
</dbReference>
<dbReference type="PDB" id="4FB3">
    <property type="method" value="X-ray"/>
    <property type="resolution" value="3.79 A"/>
    <property type="chains" value="A/B/E=290-420"/>
</dbReference>
<dbReference type="PDBsum" id="4FB3"/>
<dbReference type="SMR" id="P0DOJ4"/>
<dbReference type="GeneID" id="22619586"/>
<dbReference type="KEGG" id="vg:22619586"/>
<dbReference type="OrthoDB" id="14669at10239"/>
<dbReference type="EvolutionaryTrace" id="P0DOJ4"/>
<dbReference type="Proteomes" id="UP000116380">
    <property type="component" value="Genome"/>
</dbReference>
<dbReference type="GO" id="GO:0042025">
    <property type="term" value="C:host cell nucleus"/>
    <property type="evidence" value="ECO:0007669"/>
    <property type="project" value="UniProtKB-SubCell"/>
</dbReference>
<dbReference type="GO" id="GO:0005524">
    <property type="term" value="F:ATP binding"/>
    <property type="evidence" value="ECO:0007669"/>
    <property type="project" value="UniProtKB-KW"/>
</dbReference>
<dbReference type="GO" id="GO:0016887">
    <property type="term" value="F:ATP hydrolysis activity"/>
    <property type="evidence" value="ECO:0007669"/>
    <property type="project" value="RHEA"/>
</dbReference>
<dbReference type="GO" id="GO:0003688">
    <property type="term" value="F:DNA replication origin binding"/>
    <property type="evidence" value="ECO:0007669"/>
    <property type="project" value="InterPro"/>
</dbReference>
<dbReference type="GO" id="GO:0004386">
    <property type="term" value="F:helicase activity"/>
    <property type="evidence" value="ECO:0007669"/>
    <property type="project" value="UniProtKB-KW"/>
</dbReference>
<dbReference type="GO" id="GO:0008270">
    <property type="term" value="F:zinc ion binding"/>
    <property type="evidence" value="ECO:0007669"/>
    <property type="project" value="UniProtKB-KW"/>
</dbReference>
<dbReference type="GO" id="GO:0006260">
    <property type="term" value="P:DNA replication"/>
    <property type="evidence" value="ECO:0007669"/>
    <property type="project" value="UniProtKB-KW"/>
</dbReference>
<dbReference type="GO" id="GO:0039645">
    <property type="term" value="P:symbiont-mediated perturbation of host cell cycle G1/S transition checkpoint"/>
    <property type="evidence" value="ECO:0007669"/>
    <property type="project" value="UniProtKB-KW"/>
</dbReference>
<dbReference type="GO" id="GO:0052170">
    <property type="term" value="P:symbiont-mediated suppression of host innate immune response"/>
    <property type="evidence" value="ECO:0007669"/>
    <property type="project" value="UniProtKB-KW"/>
</dbReference>
<dbReference type="GO" id="GO:0039576">
    <property type="term" value="P:symbiont-mediated suppression of host JAK-STAT cascade via inhibition of JAK1 activity"/>
    <property type="evidence" value="ECO:0007669"/>
    <property type="project" value="UniProtKB-KW"/>
</dbReference>
<dbReference type="GO" id="GO:0039502">
    <property type="term" value="P:symbiont-mediated suppression of host type I interferon-mediated signaling pathway"/>
    <property type="evidence" value="ECO:0007669"/>
    <property type="project" value="UniProtKB-KW"/>
</dbReference>
<dbReference type="Gene3D" id="3.40.1310.20">
    <property type="match status" value="1"/>
</dbReference>
<dbReference type="Gene3D" id="1.10.287.110">
    <property type="entry name" value="DnaJ domain"/>
    <property type="match status" value="1"/>
</dbReference>
<dbReference type="Gene3D" id="1.20.1050.70">
    <property type="entry name" value="Large T antigen, SV40, domain 3"/>
    <property type="match status" value="1"/>
</dbReference>
<dbReference type="Gene3D" id="3.40.50.300">
    <property type="entry name" value="P-loop containing nucleotide triphosphate hydrolases"/>
    <property type="match status" value="1"/>
</dbReference>
<dbReference type="Gene3D" id="1.10.10.510">
    <property type="entry name" value="Zinc finger, large T-antigen D1 domain"/>
    <property type="match status" value="1"/>
</dbReference>
<dbReference type="InterPro" id="IPR001623">
    <property type="entry name" value="DnaJ_domain"/>
</dbReference>
<dbReference type="InterPro" id="IPR014015">
    <property type="entry name" value="Helicase_SF3_DNA-vir"/>
</dbReference>
<dbReference type="InterPro" id="IPR036869">
    <property type="entry name" value="J_dom_sf"/>
</dbReference>
<dbReference type="InterPro" id="IPR010932">
    <property type="entry name" value="Lg_T_Ag_Polyomavir_C"/>
</dbReference>
<dbReference type="InterPro" id="IPR027417">
    <property type="entry name" value="P-loop_NTPase"/>
</dbReference>
<dbReference type="InterPro" id="IPR003133">
    <property type="entry name" value="T_Ag_DNA-bd"/>
</dbReference>
<dbReference type="InterPro" id="IPR017910">
    <property type="entry name" value="Znf_lg_T-Ag_D1-typ"/>
</dbReference>
<dbReference type="InterPro" id="IPR037102">
    <property type="entry name" value="Znf_lg_T-Ag_D1_dom_sf"/>
</dbReference>
<dbReference type="Pfam" id="PF06431">
    <property type="entry name" value="Polyoma_lg_T_C"/>
    <property type="match status" value="1"/>
</dbReference>
<dbReference type="Pfam" id="PF02217">
    <property type="entry name" value="T_Ag_DNA_bind"/>
    <property type="match status" value="1"/>
</dbReference>
<dbReference type="SMART" id="SM00271">
    <property type="entry name" value="DnaJ"/>
    <property type="match status" value="1"/>
</dbReference>
<dbReference type="SUPFAM" id="SSF46565">
    <property type="entry name" value="Chaperone J-domain"/>
    <property type="match status" value="1"/>
</dbReference>
<dbReference type="SUPFAM" id="SSF55464">
    <property type="entry name" value="Origin of replication-binding domain, RBD-like"/>
    <property type="match status" value="1"/>
</dbReference>
<dbReference type="SUPFAM" id="SSF52540">
    <property type="entry name" value="P-loop containing nucleoside triphosphate hydrolases"/>
    <property type="match status" value="1"/>
</dbReference>
<dbReference type="PROSITE" id="PS51206">
    <property type="entry name" value="SF3_HELICASE_1"/>
    <property type="match status" value="1"/>
</dbReference>
<dbReference type="PROSITE" id="PS51287">
    <property type="entry name" value="T_AG_OBD"/>
    <property type="match status" value="1"/>
</dbReference>
<dbReference type="PROSITE" id="PS51341">
    <property type="entry name" value="ZF_LTAG_D1"/>
    <property type="match status" value="1"/>
</dbReference>
<keyword id="KW-0002">3D-structure</keyword>
<keyword id="KW-0007">Acetylation</keyword>
<keyword id="KW-0025">Alternative splicing</keyword>
<keyword id="KW-0067">ATP-binding</keyword>
<keyword id="KW-0235">DNA replication</keyword>
<keyword id="KW-0238">DNA-binding</keyword>
<keyword id="KW-0244">Early protein</keyword>
<keyword id="KW-1078">G1/S host cell cycle checkpoint dysregulation by virus</keyword>
<keyword id="KW-0347">Helicase</keyword>
<keyword id="KW-1048">Host nucleus</keyword>
<keyword id="KW-0945">Host-virus interaction</keyword>
<keyword id="KW-0378">Hydrolase</keyword>
<keyword id="KW-1090">Inhibition of host innate immune response by virus</keyword>
<keyword id="KW-1114">Inhibition of host interferon signaling pathway by virus</keyword>
<keyword id="KW-1096">Inhibition of host JAK1 by virus</keyword>
<keyword id="KW-0922">Interferon antiviral system evasion</keyword>
<keyword id="KW-0413">Isomerase</keyword>
<keyword id="KW-0460">Magnesium</keyword>
<keyword id="KW-0479">Metal-binding</keyword>
<keyword id="KW-1121">Modulation of host cell cycle by virus</keyword>
<keyword id="KW-0547">Nucleotide-binding</keyword>
<keyword id="KW-0553">Oncogene</keyword>
<keyword id="KW-0597">Phosphoprotein</keyword>
<keyword id="KW-0899">Viral immunoevasion</keyword>
<keyword id="KW-0862">Zinc</keyword>
<keyword id="KW-0863">Zinc-finger</keyword>
<sequence>MDRVLSRADKERLLELLKLPRQLWGDFGRMQQAYKQQSLLLHPDKGGSHALMQELNSLWGTFKTEVYNLRMNLGGTGFQGSPPRTAERGTEESGHSPLHDDYWSFSYGSKYFTREWNDFFRKWDPSYQSPPKTAESSEQPDLFCYEEPLLSPNPSSPTDTPAHTAGRRRNPCVAEPDDSISPDPPRTPVSRKRPRPAGATGGGGGGVHANGGSVFGHPTGGTSTPAHPPPYHSQGGSESMGGSDSSGFAEGSFRSDPRCESENESYSQSCSQSSFNATPPKKAREDPAPSDFPSSLTGYLSHAIYSNKTFPAFLVYSTKEKCKQLYDTIGKFRPEFKCLVHYEEGGMLFFLTMTKHRVSAVKNYCSKLCSVSFLMCKAVTKPMECYQVVTAAPFQLITENKPGLHQFEFTDEPEEQKAVDWIMVADFALENNLDDPLLIMGYYLDFAKEVPSCIKCSKEETRLQIHWKNHRKHAENADLFLNCKAQKTICQQAADGVLASRRLKLVECTRSQLLKERLQQSLLRLKELGSSDALLYLAGVAWYQCLLEDFPQTLFKMLKLLTENVPKRRNILFRGPVNSGKTGLAAALISLLGGKSLNINCPADKLAFELGVAQDQFVVCFEDVKGQIALNKQLQPGMGVANLDNLRDYLDGSVKVNLEKKHSNKRSQLFPPCVCTMNEYLLPQTVWARFHMVLDFTCKPHLAQSLEKCEFLQRERIIQSGDTLALLLIWNFTSDVFDPDIQGLVKEVRDQFASECSYSLFCDILCNVQEGDDPLKDICEYS</sequence>
<organism>
    <name type="scientific">Murine polyomavirus (strain BG)</name>
    <name type="common">MPyV</name>
    <dbReference type="NCBI Taxonomy" id="179241"/>
    <lineage>
        <taxon>Viruses</taxon>
        <taxon>Monodnaviria</taxon>
        <taxon>Shotokuvirae</taxon>
        <taxon>Cossaviricota</taxon>
        <taxon>Papovaviricetes</taxon>
        <taxon>Sepolyvirales</taxon>
        <taxon>Polyomaviridae</taxon>
        <taxon>Alphapolyomavirus</taxon>
        <taxon>Mus musculus polyomavirus 1</taxon>
    </lineage>
</organism>
<proteinExistence type="evidence at protein level"/>
<evidence type="ECO:0000250" key="1">
    <source>
        <dbReference type="UniProtKB" id="P03070"/>
    </source>
</evidence>
<evidence type="ECO:0000255" key="2">
    <source>
        <dbReference type="PROSITE-ProRule" id="PRU00551"/>
    </source>
</evidence>
<evidence type="ECO:0000255" key="3">
    <source>
        <dbReference type="PROSITE-ProRule" id="PRU00620"/>
    </source>
</evidence>
<evidence type="ECO:0000255" key="4">
    <source>
        <dbReference type="PROSITE-ProRule" id="PRU00671"/>
    </source>
</evidence>
<evidence type="ECO:0000256" key="5">
    <source>
        <dbReference type="SAM" id="MobiDB-lite"/>
    </source>
</evidence>
<evidence type="ECO:0000305" key="6"/>
<evidence type="ECO:0007744" key="7">
    <source>
        <dbReference type="PDB" id="4FB3"/>
    </source>
</evidence>
<comment type="function">
    <text evidence="1">Isoform large T antigen is a key early protein essential for both driving viral replication and inducing cellular transformation. Plays a role in viral genome replication by driving entry of quiescent cells into the cell cycle and by autoregulating the synthesis of viral early mRNA. Displays highly oncogenic activities by corrupting the host cellular checkpoint mechanisms that guard cell division and the transcription, replication, and repair of DNA. Participates in the modulation of cellular gene expression preceeding viral DNA replication. This step involves binding to host key cell cycle regulators retinoblastoma protein RB1/pRb and TP53. Induces the disassembly of host E2F1 transcription factors from RB1, thus promoting transcriptional activation of E2F1-regulated S-phase genes. Inhibits host TP53 binding to DNA, abrogating the ability of TP53 to stimulate gene expression. Plays the role of a TFIID-associated factor (TAF) in transcription initiation for all three RNA polymerases, by stabilizing the TBP-TFIIA complex on promoters. Initiates viral DNA replication and unwinding via interactions with the viral origin of replication. Binds two adjacent sites in the SV40 origin. The replication fork movement is facilitated by Large T antigen helicase activity. Has processive 3'-5' DNA helicase activity which requires a short 3' single-stranded region and ATP. Activates the transcription of viral late mRNA, through host TBP and TFIIA stabilization. Interferes with histone deacetylation mediated by HDAC1, leading to activation of transcription.</text>
</comment>
<comment type="catalytic activity">
    <reaction evidence="1">
        <text>Couples ATP hydrolysis with the unwinding of duplex DNA by translocating in the 3'-5' direction.</text>
        <dbReference type="EC" id="5.6.2.4"/>
    </reaction>
</comment>
<comment type="catalytic activity">
    <reaction evidence="1">
        <text>ATP + H2O = ADP + phosphate + H(+)</text>
        <dbReference type="Rhea" id="RHEA:13065"/>
        <dbReference type="ChEBI" id="CHEBI:15377"/>
        <dbReference type="ChEBI" id="CHEBI:15378"/>
        <dbReference type="ChEBI" id="CHEBI:30616"/>
        <dbReference type="ChEBI" id="CHEBI:43474"/>
        <dbReference type="ChEBI" id="CHEBI:456216"/>
        <dbReference type="EC" id="5.6.2.4"/>
    </reaction>
</comment>
<comment type="cofactor">
    <cofactor evidence="1">
        <name>Mg(2+)</name>
        <dbReference type="ChEBI" id="CHEBI:18420"/>
    </cofactor>
    <text evidence="1">DNA helicase activity requires Mg(2+).</text>
</comment>
<comment type="subunit">
    <text evidence="1">Forms homohexamers in the presence of ATP. Interacts with host HDAC1. Interacts (via LXCXE domain) with host RB1; the interaction induces the aberrant dissociation of RB1-E2F1 complex thereby disrupting RB1's activity. Interacts (via LXCXE domain) with host pRB-related proteins RBL1 and RBL2. Interacts (via C-terminus) with host TOP1 and POLA1 allowing DNA replication. Interacts with host preinitiation complex components TBP, TFIIA and TFIID to regulate transcription initiation.</text>
</comment>
<comment type="subcellular location">
    <subcellularLocation>
        <location evidence="1">Host nucleus</location>
    </subcellularLocation>
</comment>
<comment type="alternative products">
    <event type="alternative splicing"/>
    <isoform>
        <id>P0DOJ4-1</id>
        <id>P03074-1</id>
        <name>Large T antigen</name>
        <sequence type="displayed"/>
    </isoform>
    <isoform>
        <id>P0DOJ7-1</id>
        <id>P03076-1</id>
        <name>Middle T antigen</name>
        <sequence type="external"/>
    </isoform>
    <isoform>
        <id>P0DOJ4-2</id>
        <name>Small t antigen</name>
        <sequence type="not described"/>
    </isoform>
</comment>
<comment type="domain">
    <text evidence="1">The J domain is essential for multiple viral activities, including virion assembly, viral DNA replication, transformation and transcriptional activation.</text>
</comment>
<comment type="domain">
    <text evidence="1">The LXCXE motif specifically binds to host pRB, RBL1, and RBL2.</text>
</comment>
<comment type="domain">
    <text evidence="1">The zinc finger region contributes to protein-protein interactions essential for the assembly of stable T-antigen hexamers at the origin of replication. The hexamers are required for subsequent alterations in the structure of origin DNA (By similarity).</text>
</comment>
<comment type="domain">
    <text evidence="1">The ATP binding/ATPase domain is required for proper hexamer assembly and helicase activity.</text>
</comment>
<comment type="PTM">
    <text evidence="1">Phosphorylated on both serine and threonine residues. Small t antigen inhibits the dephosphorylation by the AC form of PP2A (By similarity).</text>
</comment>
<comment type="PTM">
    <text evidence="1">O-Glycosylated near the C-terminal region.</text>
</comment>
<comment type="PTM">
    <text evidence="1">Acetylated by CBP in a TP53-dependent manner.</text>
</comment>
<organismHost>
    <name type="scientific">Mus musculus</name>
    <name type="common">Mouse</name>
    <dbReference type="NCBI Taxonomy" id="10090"/>
</organismHost>
<protein>
    <recommendedName>
        <fullName>Large T antigen</fullName>
        <shortName>LT</shortName>
        <shortName>LT-AG</shortName>
        <ecNumber evidence="1">5.6.2.4</ecNumber>
    </recommendedName>
    <alternativeName>
        <fullName evidence="6">DNA 3'-5' helicase large T antigen</fullName>
    </alternativeName>
</protein>
<reference key="1">
    <citation type="submission" date="2001-11" db="EMBL/GenBank/DDBJ databases">
        <authorList>
            <person name="Clark B.E."/>
            <person name="Griffin B.E."/>
        </authorList>
    </citation>
    <scope>NUCLEOTIDE SEQUENCE [GENOMIC DNA]</scope>
</reference>
<reference evidence="7" key="2">
    <citation type="journal article" date="2013" name="J. Virol.">
        <title>Polyomavirus large T antigen binds symmetrical repeats at the viral origin in an asymmetrical manner.</title>
        <authorList>
            <person name="Harrison C."/>
            <person name="Jiang T."/>
            <person name="Banerjee P."/>
            <person name="Meinke G."/>
            <person name="D'Abramo C.M."/>
            <person name="Schaffhausen B."/>
            <person name="Bohm A."/>
        </authorList>
    </citation>
    <scope>X-RAY CRYSTALLOGRAPHY (3.79 ANGSTROMS) OF 290-420</scope>
</reference>
<name>LT_POVBG</name>
<feature type="chain" id="PRO_0000115042" description="Large T antigen">
    <location>
        <begin position="1"/>
        <end position="782"/>
    </location>
</feature>
<feature type="domain" description="J">
    <location>
        <begin position="12"/>
        <end position="75"/>
    </location>
</feature>
<feature type="domain" description="SF3 helicase" evidence="2">
    <location>
        <begin position="549"/>
        <end position="709"/>
    </location>
</feature>
<feature type="DNA-binding region" description="T-ag OBD" evidence="3">
    <location>
        <begin position="293"/>
        <end position="407"/>
    </location>
</feature>
<feature type="zinc finger region" description="T-ag D1-type" evidence="4">
    <location>
        <begin position="416"/>
        <end position="510"/>
    </location>
</feature>
<feature type="region of interest" description="Disordered" evidence="5">
    <location>
        <begin position="74"/>
        <end position="97"/>
    </location>
</feature>
<feature type="region of interest" description="Disordered" evidence="5">
    <location>
        <begin position="145"/>
        <end position="291"/>
    </location>
</feature>
<feature type="short sequence motif" description="LXCXE motif" evidence="1">
    <location>
        <begin position="142"/>
        <end position="146"/>
    </location>
</feature>
<feature type="short sequence motif" description="Nuclear localization signal" evidence="1">
    <location>
        <begin position="279"/>
        <end position="286"/>
    </location>
</feature>
<feature type="compositionally biased region" description="Basic and acidic residues" evidence="5">
    <location>
        <begin position="85"/>
        <end position="97"/>
    </location>
</feature>
<feature type="compositionally biased region" description="Low complexity" evidence="5">
    <location>
        <begin position="148"/>
        <end position="161"/>
    </location>
</feature>
<feature type="compositionally biased region" description="Gly residues" evidence="5">
    <location>
        <begin position="199"/>
        <end position="209"/>
    </location>
</feature>
<feature type="compositionally biased region" description="Low complexity" evidence="5">
    <location>
        <begin position="233"/>
        <end position="247"/>
    </location>
</feature>
<feature type="compositionally biased region" description="Low complexity" evidence="5">
    <location>
        <begin position="264"/>
        <end position="274"/>
    </location>
</feature>
<feature type="binding site" evidence="4">
    <location>
        <position position="453"/>
    </location>
    <ligand>
        <name>Zn(2+)</name>
        <dbReference type="ChEBI" id="CHEBI:29105"/>
    </ligand>
</feature>
<feature type="binding site" evidence="4">
    <location>
        <position position="456"/>
    </location>
    <ligand>
        <name>Zn(2+)</name>
        <dbReference type="ChEBI" id="CHEBI:29105"/>
    </ligand>
</feature>
<feature type="binding site" evidence="4">
    <location>
        <position position="466"/>
    </location>
    <ligand>
        <name>Zn(2+)</name>
        <dbReference type="ChEBI" id="CHEBI:29105"/>
    </ligand>
</feature>
<feature type="binding site" evidence="4">
    <location>
        <position position="470"/>
    </location>
    <ligand>
        <name>Zn(2+)</name>
        <dbReference type="ChEBI" id="CHEBI:29105"/>
    </ligand>
</feature>
<feature type="binding site" evidence="2">
    <location>
        <begin position="575"/>
        <end position="582"/>
    </location>
    <ligand>
        <name>ATP</name>
        <dbReference type="ChEBI" id="CHEBI:30616"/>
    </ligand>
</feature>
<feature type="modified residue" description="N-acetylmethionine; by host" evidence="1">
    <location>
        <position position="1"/>
    </location>
</feature>
<feature type="modified residue" description="Phosphothreonine; by host" evidence="1">
    <location>
        <position position="278"/>
    </location>
</feature>